<organism>
    <name type="scientific">Heterosigma akashiwo (strain NIES-293 / 8280G21-1)</name>
    <dbReference type="NCBI Taxonomy" id="536047"/>
    <lineage>
        <taxon>Eukaryota</taxon>
        <taxon>Sar</taxon>
        <taxon>Stramenopiles</taxon>
        <taxon>Ochrophyta</taxon>
        <taxon>Raphidophyceae</taxon>
        <taxon>Chattonellales</taxon>
        <taxon>Chattonellaceae</taxon>
        <taxon>Heterosigma</taxon>
    </lineage>
</organism>
<sequence length="663" mass="71692">MNKKETNTSWWRIILISLGISIICILAAFLAMKDGFFVLENNTKNNNPDSPENKASSKMAYARLLNYIEKGWIKTIDFYENGQIAIVEASSSELSDRPQRLRVEIPAGSTSLIGKLKEANVDINAHPPKLDIFKTISDTLGSLIVPGLVVAVFYLFLERANNNNNNNSNGSPFGPGGGPNQNMRGLGEIKKEIQKEPDTGITFKDIAGIEEVKEEFEEIVTFLKDPSRFTAVGATIPKGVLLVGPPGTGKTLLAKAIAGEAKVPFINISGSEFVEMFVGVGAARVRNLFEKAKQDTPCIIFIDEIDAVGRQRGAGVGGGNDEREQTLNQLLTEMDGFEKNKGIVVIAATNRADILDNALLRPGRFDRQVTVNPPDRAGRVAILAVHARNKKLSPAISLETIAQRTTGFGGAELANLLNEAAIISAREEKAEIGSKEISLAIERVIAGLEGPSIADNKNKRLVAYHEAGHAMVGTLLRNHDNVQNVTLVPRGQARGLTWFMPNEDPSLVTRGQIVARIVGALGGRAAEQSVFGSTEITTGASGDLAQVTDLAKQMILRFGMSGIGPVSLSKPGGSFLFVGRGVRPSNEYSEALAIKIDEQIRTITELCYNEAVEIMDLNRISLDLAVTGLIQDEVLTGVSFEKVVADFSKLPTNKIYESKFPKK</sequence>
<feature type="chain" id="PRO_0000400420" description="ATP-dependent zinc metalloprotease FtsH">
    <location>
        <begin position="1"/>
        <end position="663"/>
    </location>
</feature>
<feature type="topological domain" description="Stromal" evidence="1">
    <location>
        <begin position="1"/>
        <end position="12"/>
    </location>
</feature>
<feature type="transmembrane region" description="Helical" evidence="1">
    <location>
        <begin position="13"/>
        <end position="33"/>
    </location>
</feature>
<feature type="topological domain" description="Lumenal" evidence="1">
    <location>
        <begin position="34"/>
        <end position="135"/>
    </location>
</feature>
<feature type="transmembrane region" description="Helical" evidence="1">
    <location>
        <begin position="136"/>
        <end position="156"/>
    </location>
</feature>
<feature type="topological domain" description="Stromal" evidence="1">
    <location>
        <begin position="157"/>
        <end position="663"/>
    </location>
</feature>
<feature type="region of interest" description="Disordered" evidence="2">
    <location>
        <begin position="165"/>
        <end position="184"/>
    </location>
</feature>
<feature type="active site" evidence="1">
    <location>
        <position position="466"/>
    </location>
</feature>
<feature type="binding site" evidence="1">
    <location>
        <begin position="244"/>
        <end position="251"/>
    </location>
    <ligand>
        <name>ATP</name>
        <dbReference type="ChEBI" id="CHEBI:30616"/>
    </ligand>
</feature>
<feature type="binding site" evidence="1">
    <location>
        <position position="465"/>
    </location>
    <ligand>
        <name>Zn(2+)</name>
        <dbReference type="ChEBI" id="CHEBI:29105"/>
        <note>catalytic</note>
    </ligand>
</feature>
<feature type="binding site" evidence="1">
    <location>
        <position position="469"/>
    </location>
    <ligand>
        <name>Zn(2+)</name>
        <dbReference type="ChEBI" id="CHEBI:29105"/>
        <note>catalytic</note>
    </ligand>
</feature>
<feature type="binding site" evidence="1">
    <location>
        <position position="543"/>
    </location>
    <ligand>
        <name>Zn(2+)</name>
        <dbReference type="ChEBI" id="CHEBI:29105"/>
        <note>catalytic</note>
    </ligand>
</feature>
<geneLocation type="chloroplast"/>
<keyword id="KW-0067">ATP-binding</keyword>
<keyword id="KW-0150">Chloroplast</keyword>
<keyword id="KW-0378">Hydrolase</keyword>
<keyword id="KW-0472">Membrane</keyword>
<keyword id="KW-0479">Metal-binding</keyword>
<keyword id="KW-0482">Metalloprotease</keyword>
<keyword id="KW-0547">Nucleotide-binding</keyword>
<keyword id="KW-0934">Plastid</keyword>
<keyword id="KW-0645">Protease</keyword>
<keyword id="KW-0793">Thylakoid</keyword>
<keyword id="KW-0812">Transmembrane</keyword>
<keyword id="KW-1133">Transmembrane helix</keyword>
<keyword id="KW-0862">Zinc</keyword>
<name>FTSH_HETA2</name>
<proteinExistence type="inferred from homology"/>
<protein>
    <recommendedName>
        <fullName evidence="1">ATP-dependent zinc metalloprotease FtsH</fullName>
        <ecNumber evidence="1">3.4.24.-</ecNumber>
    </recommendedName>
</protein>
<dbReference type="EC" id="3.4.24.-" evidence="1"/>
<dbReference type="EMBL" id="EU168190">
    <property type="protein sequence ID" value="ABV66055.1"/>
    <property type="molecule type" value="Genomic_DNA"/>
</dbReference>
<dbReference type="RefSeq" id="YP_001936449.1">
    <property type="nucleotide sequence ID" value="NC_010772.1"/>
</dbReference>
<dbReference type="SMR" id="B2XTF7"/>
<dbReference type="MEROPS" id="M41.017"/>
<dbReference type="GeneID" id="6335642"/>
<dbReference type="GO" id="GO:0009535">
    <property type="term" value="C:chloroplast thylakoid membrane"/>
    <property type="evidence" value="ECO:0007669"/>
    <property type="project" value="UniProtKB-SubCell"/>
</dbReference>
<dbReference type="GO" id="GO:0005524">
    <property type="term" value="F:ATP binding"/>
    <property type="evidence" value="ECO:0007669"/>
    <property type="project" value="UniProtKB-UniRule"/>
</dbReference>
<dbReference type="GO" id="GO:0016887">
    <property type="term" value="F:ATP hydrolysis activity"/>
    <property type="evidence" value="ECO:0007669"/>
    <property type="project" value="UniProtKB-UniRule"/>
</dbReference>
<dbReference type="GO" id="GO:0004176">
    <property type="term" value="F:ATP-dependent peptidase activity"/>
    <property type="evidence" value="ECO:0007669"/>
    <property type="project" value="InterPro"/>
</dbReference>
<dbReference type="GO" id="GO:0004222">
    <property type="term" value="F:metalloendopeptidase activity"/>
    <property type="evidence" value="ECO:0007669"/>
    <property type="project" value="InterPro"/>
</dbReference>
<dbReference type="GO" id="GO:0008270">
    <property type="term" value="F:zinc ion binding"/>
    <property type="evidence" value="ECO:0007669"/>
    <property type="project" value="UniProtKB-UniRule"/>
</dbReference>
<dbReference type="GO" id="GO:0030163">
    <property type="term" value="P:protein catabolic process"/>
    <property type="evidence" value="ECO:0007669"/>
    <property type="project" value="UniProtKB-UniRule"/>
</dbReference>
<dbReference type="GO" id="GO:0006508">
    <property type="term" value="P:proteolysis"/>
    <property type="evidence" value="ECO:0007669"/>
    <property type="project" value="UniProtKB-KW"/>
</dbReference>
<dbReference type="CDD" id="cd19501">
    <property type="entry name" value="RecA-like_FtsH"/>
    <property type="match status" value="1"/>
</dbReference>
<dbReference type="FunFam" id="1.10.8.60:FF:000001">
    <property type="entry name" value="ATP-dependent zinc metalloprotease FtsH"/>
    <property type="match status" value="1"/>
</dbReference>
<dbReference type="FunFam" id="1.20.58.760:FF:000001">
    <property type="entry name" value="ATP-dependent zinc metalloprotease FtsH"/>
    <property type="match status" value="1"/>
</dbReference>
<dbReference type="FunFam" id="3.40.50.300:FF:000001">
    <property type="entry name" value="ATP-dependent zinc metalloprotease FtsH"/>
    <property type="match status" value="1"/>
</dbReference>
<dbReference type="Gene3D" id="1.10.8.60">
    <property type="match status" value="1"/>
</dbReference>
<dbReference type="Gene3D" id="3.30.720.210">
    <property type="match status" value="1"/>
</dbReference>
<dbReference type="Gene3D" id="3.40.50.300">
    <property type="entry name" value="P-loop containing nucleotide triphosphate hydrolases"/>
    <property type="match status" value="1"/>
</dbReference>
<dbReference type="Gene3D" id="1.20.58.760">
    <property type="entry name" value="Peptidase M41"/>
    <property type="match status" value="1"/>
</dbReference>
<dbReference type="HAMAP" id="MF_01458">
    <property type="entry name" value="FtsH"/>
    <property type="match status" value="1"/>
</dbReference>
<dbReference type="InterPro" id="IPR003593">
    <property type="entry name" value="AAA+_ATPase"/>
</dbReference>
<dbReference type="InterPro" id="IPR041569">
    <property type="entry name" value="AAA_lid_3"/>
</dbReference>
<dbReference type="InterPro" id="IPR003959">
    <property type="entry name" value="ATPase_AAA_core"/>
</dbReference>
<dbReference type="InterPro" id="IPR003960">
    <property type="entry name" value="ATPase_AAA_CS"/>
</dbReference>
<dbReference type="InterPro" id="IPR005936">
    <property type="entry name" value="FtsH"/>
</dbReference>
<dbReference type="InterPro" id="IPR027417">
    <property type="entry name" value="P-loop_NTPase"/>
</dbReference>
<dbReference type="InterPro" id="IPR011546">
    <property type="entry name" value="Pept_M41_FtsH_extracell"/>
</dbReference>
<dbReference type="InterPro" id="IPR000642">
    <property type="entry name" value="Peptidase_M41"/>
</dbReference>
<dbReference type="InterPro" id="IPR037219">
    <property type="entry name" value="Peptidase_M41-like"/>
</dbReference>
<dbReference type="NCBIfam" id="TIGR01241">
    <property type="entry name" value="FtsH_fam"/>
    <property type="match status" value="1"/>
</dbReference>
<dbReference type="PANTHER" id="PTHR23076:SF139">
    <property type="entry name" value="ATP-DEPENDENT ZINC METALLOPROTEASE FTSH 2, CHLOROPLASTIC"/>
    <property type="match status" value="1"/>
</dbReference>
<dbReference type="PANTHER" id="PTHR23076">
    <property type="entry name" value="METALLOPROTEASE M41 FTSH"/>
    <property type="match status" value="1"/>
</dbReference>
<dbReference type="Pfam" id="PF00004">
    <property type="entry name" value="AAA"/>
    <property type="match status" value="1"/>
</dbReference>
<dbReference type="Pfam" id="PF17862">
    <property type="entry name" value="AAA_lid_3"/>
    <property type="match status" value="1"/>
</dbReference>
<dbReference type="Pfam" id="PF06480">
    <property type="entry name" value="FtsH_ext"/>
    <property type="match status" value="1"/>
</dbReference>
<dbReference type="Pfam" id="PF01434">
    <property type="entry name" value="Peptidase_M41"/>
    <property type="match status" value="1"/>
</dbReference>
<dbReference type="SMART" id="SM00382">
    <property type="entry name" value="AAA"/>
    <property type="match status" value="1"/>
</dbReference>
<dbReference type="SUPFAM" id="SSF140990">
    <property type="entry name" value="FtsH protease domain-like"/>
    <property type="match status" value="1"/>
</dbReference>
<dbReference type="SUPFAM" id="SSF52540">
    <property type="entry name" value="P-loop containing nucleoside triphosphate hydrolases"/>
    <property type="match status" value="1"/>
</dbReference>
<dbReference type="PROSITE" id="PS00674">
    <property type="entry name" value="AAA"/>
    <property type="match status" value="1"/>
</dbReference>
<reference key="1">
    <citation type="journal article" date="2008" name="BMC Genomics">
        <title>Chloroplast genome sequencing analysis of Heterosigma akashiwo CCMP452 (West Atlantic) and NIES293 (West Pacific) strains.</title>
        <authorList>
            <person name="Cattolico R.A."/>
            <person name="Jacobs M.A."/>
            <person name="Zhou Y."/>
            <person name="Chang J."/>
            <person name="Duplessis M."/>
            <person name="Lybrand T."/>
            <person name="McKay J."/>
            <person name="Ong H.C."/>
            <person name="Sims E."/>
            <person name="Rocap G."/>
        </authorList>
    </citation>
    <scope>NUCLEOTIDE SEQUENCE [LARGE SCALE GENOMIC DNA]</scope>
</reference>
<evidence type="ECO:0000255" key="1">
    <source>
        <dbReference type="HAMAP-Rule" id="MF_01458"/>
    </source>
</evidence>
<evidence type="ECO:0000256" key="2">
    <source>
        <dbReference type="SAM" id="MobiDB-lite"/>
    </source>
</evidence>
<gene>
    <name evidence="1" type="primary">ftsH</name>
    <name type="ordered locus">Heak293_Cp148</name>
</gene>
<accession>B2XTF7</accession>
<comment type="function">
    <text evidence="1">Acts as a processive, ATP-dependent zinc metallopeptidase.</text>
</comment>
<comment type="cofactor">
    <cofactor evidence="1">
        <name>Zn(2+)</name>
        <dbReference type="ChEBI" id="CHEBI:29105"/>
    </cofactor>
    <text evidence="1">Binds 1 zinc ion per subunit.</text>
</comment>
<comment type="subunit">
    <text evidence="1">Homohexamer.</text>
</comment>
<comment type="subcellular location">
    <subcellularLocation>
        <location evidence="1">Plastid</location>
        <location evidence="1">Chloroplast thylakoid membrane</location>
        <topology evidence="1">Multi-pass membrane protein</topology>
        <orientation evidence="1">Stromal side</orientation>
    </subcellularLocation>
</comment>
<comment type="similarity">
    <text evidence="1">In the central section; belongs to the AAA ATPase family.</text>
</comment>
<comment type="similarity">
    <text evidence="1">In the C-terminal section; belongs to the peptidase M41 family.</text>
</comment>